<accession>A3QFL1</accession>
<sequence length="398" mass="42968">MSNKLVLVLNCGSSSLKFAIIDALTGDDQISGLAECFGLEDSRIKWKVDGNKFESKLGAFTAHREAVEFIVKEILGQYPDVAAQIQAIGHRVVHGGEKFTHSVVIDDSVIAGIEDCAALAPLHNPAHLIGIRAAQASFPGLPQVAVFDTAFHQTMPERAFVYALPYKLYREHGIRRYGMHGTSHLFVSREAAKALGKELADTNVICAHLGNGASVTAVKGGKSVDTSMGLTPLEGLVMGTRCGDIDPSIIYHLVDRLGYTLDEVNNLMNKQSGLLGISELTNDCRGIEEGYAEGHKGATLALEIFCYRLAKYIASYTVPLGRLDALVFTGGIGENSDLIREKVLNLLAIFNFEVDPARNQAARFGNQGQITTDNGPVAMVIPTNEEWVIAEDAVSLLK</sequence>
<comment type="function">
    <text evidence="1">Catalyzes the formation of acetyl phosphate from acetate and ATP. Can also catalyze the reverse reaction.</text>
</comment>
<comment type="catalytic activity">
    <reaction evidence="1">
        <text>acetate + ATP = acetyl phosphate + ADP</text>
        <dbReference type="Rhea" id="RHEA:11352"/>
        <dbReference type="ChEBI" id="CHEBI:22191"/>
        <dbReference type="ChEBI" id="CHEBI:30089"/>
        <dbReference type="ChEBI" id="CHEBI:30616"/>
        <dbReference type="ChEBI" id="CHEBI:456216"/>
        <dbReference type="EC" id="2.7.2.1"/>
    </reaction>
</comment>
<comment type="cofactor">
    <cofactor evidence="1">
        <name>Mg(2+)</name>
        <dbReference type="ChEBI" id="CHEBI:18420"/>
    </cofactor>
    <cofactor evidence="1">
        <name>Mn(2+)</name>
        <dbReference type="ChEBI" id="CHEBI:29035"/>
    </cofactor>
    <text evidence="1">Mg(2+). Can also accept Mn(2+).</text>
</comment>
<comment type="pathway">
    <text evidence="1">Metabolic intermediate biosynthesis; acetyl-CoA biosynthesis; acetyl-CoA from acetate: step 1/2.</text>
</comment>
<comment type="subunit">
    <text evidence="1">Homodimer.</text>
</comment>
<comment type="subcellular location">
    <subcellularLocation>
        <location evidence="1">Cytoplasm</location>
    </subcellularLocation>
</comment>
<comment type="similarity">
    <text evidence="1">Belongs to the acetokinase family.</text>
</comment>
<name>ACKA_SHELP</name>
<proteinExistence type="inferred from homology"/>
<protein>
    <recommendedName>
        <fullName evidence="1">Acetate kinase</fullName>
        <ecNumber evidence="1">2.7.2.1</ecNumber>
    </recommendedName>
    <alternativeName>
        <fullName evidence="1">Acetokinase</fullName>
    </alternativeName>
</protein>
<feature type="chain" id="PRO_1000002255" description="Acetate kinase">
    <location>
        <begin position="1"/>
        <end position="398"/>
    </location>
</feature>
<feature type="active site" description="Proton donor/acceptor" evidence="1">
    <location>
        <position position="148"/>
    </location>
</feature>
<feature type="binding site" evidence="1">
    <location>
        <position position="10"/>
    </location>
    <ligand>
        <name>Mg(2+)</name>
        <dbReference type="ChEBI" id="CHEBI:18420"/>
    </ligand>
</feature>
<feature type="binding site" evidence="1">
    <location>
        <position position="17"/>
    </location>
    <ligand>
        <name>ATP</name>
        <dbReference type="ChEBI" id="CHEBI:30616"/>
    </ligand>
</feature>
<feature type="binding site" evidence="1">
    <location>
        <position position="91"/>
    </location>
    <ligand>
        <name>substrate</name>
    </ligand>
</feature>
<feature type="binding site" evidence="1">
    <location>
        <begin position="208"/>
        <end position="212"/>
    </location>
    <ligand>
        <name>ATP</name>
        <dbReference type="ChEBI" id="CHEBI:30616"/>
    </ligand>
</feature>
<feature type="binding site" evidence="1">
    <location>
        <begin position="283"/>
        <end position="285"/>
    </location>
    <ligand>
        <name>ATP</name>
        <dbReference type="ChEBI" id="CHEBI:30616"/>
    </ligand>
</feature>
<feature type="binding site" evidence="1">
    <location>
        <begin position="331"/>
        <end position="335"/>
    </location>
    <ligand>
        <name>ATP</name>
        <dbReference type="ChEBI" id="CHEBI:30616"/>
    </ligand>
</feature>
<feature type="binding site" evidence="1">
    <location>
        <position position="385"/>
    </location>
    <ligand>
        <name>Mg(2+)</name>
        <dbReference type="ChEBI" id="CHEBI:18420"/>
    </ligand>
</feature>
<feature type="site" description="Transition state stabilizer" evidence="1">
    <location>
        <position position="180"/>
    </location>
</feature>
<feature type="site" description="Transition state stabilizer" evidence="1">
    <location>
        <position position="241"/>
    </location>
</feature>
<gene>
    <name evidence="1" type="primary">ackA</name>
    <name type="ordered locus">Shew_2393</name>
</gene>
<keyword id="KW-0067">ATP-binding</keyword>
<keyword id="KW-0963">Cytoplasm</keyword>
<keyword id="KW-0418">Kinase</keyword>
<keyword id="KW-0460">Magnesium</keyword>
<keyword id="KW-0479">Metal-binding</keyword>
<keyword id="KW-0547">Nucleotide-binding</keyword>
<keyword id="KW-1185">Reference proteome</keyword>
<keyword id="KW-0808">Transferase</keyword>
<dbReference type="EC" id="2.7.2.1" evidence="1"/>
<dbReference type="EMBL" id="CP000606">
    <property type="protein sequence ID" value="ABO24259.1"/>
    <property type="molecule type" value="Genomic_DNA"/>
</dbReference>
<dbReference type="RefSeq" id="WP_011866190.1">
    <property type="nucleotide sequence ID" value="NC_009092.1"/>
</dbReference>
<dbReference type="SMR" id="A3QFL1"/>
<dbReference type="STRING" id="323850.Shew_2393"/>
<dbReference type="KEGG" id="slo:Shew_2393"/>
<dbReference type="eggNOG" id="COG0282">
    <property type="taxonomic scope" value="Bacteria"/>
</dbReference>
<dbReference type="HOGENOM" id="CLU_020352_0_1_6"/>
<dbReference type="OrthoDB" id="9802453at2"/>
<dbReference type="UniPathway" id="UPA00340">
    <property type="reaction ID" value="UER00458"/>
</dbReference>
<dbReference type="Proteomes" id="UP000001558">
    <property type="component" value="Chromosome"/>
</dbReference>
<dbReference type="GO" id="GO:0005829">
    <property type="term" value="C:cytosol"/>
    <property type="evidence" value="ECO:0007669"/>
    <property type="project" value="TreeGrafter"/>
</dbReference>
<dbReference type="GO" id="GO:0008776">
    <property type="term" value="F:acetate kinase activity"/>
    <property type="evidence" value="ECO:0007669"/>
    <property type="project" value="UniProtKB-UniRule"/>
</dbReference>
<dbReference type="GO" id="GO:0005524">
    <property type="term" value="F:ATP binding"/>
    <property type="evidence" value="ECO:0007669"/>
    <property type="project" value="UniProtKB-KW"/>
</dbReference>
<dbReference type="GO" id="GO:0000287">
    <property type="term" value="F:magnesium ion binding"/>
    <property type="evidence" value="ECO:0007669"/>
    <property type="project" value="UniProtKB-UniRule"/>
</dbReference>
<dbReference type="GO" id="GO:0006083">
    <property type="term" value="P:acetate metabolic process"/>
    <property type="evidence" value="ECO:0007669"/>
    <property type="project" value="TreeGrafter"/>
</dbReference>
<dbReference type="GO" id="GO:0006085">
    <property type="term" value="P:acetyl-CoA biosynthetic process"/>
    <property type="evidence" value="ECO:0007669"/>
    <property type="project" value="UniProtKB-UniRule"/>
</dbReference>
<dbReference type="CDD" id="cd24010">
    <property type="entry name" value="ASKHA_NBD_AcK_PK"/>
    <property type="match status" value="1"/>
</dbReference>
<dbReference type="FunFam" id="3.30.420.40:FF:000041">
    <property type="entry name" value="Acetate kinase"/>
    <property type="match status" value="1"/>
</dbReference>
<dbReference type="Gene3D" id="3.30.420.40">
    <property type="match status" value="2"/>
</dbReference>
<dbReference type="HAMAP" id="MF_00020">
    <property type="entry name" value="Acetate_kinase"/>
    <property type="match status" value="1"/>
</dbReference>
<dbReference type="InterPro" id="IPR004372">
    <property type="entry name" value="Ac/propionate_kinase"/>
</dbReference>
<dbReference type="InterPro" id="IPR000890">
    <property type="entry name" value="Aliphatic_acid_kin_short-chain"/>
</dbReference>
<dbReference type="InterPro" id="IPR023865">
    <property type="entry name" value="Aliphatic_acid_kinase_CS"/>
</dbReference>
<dbReference type="InterPro" id="IPR043129">
    <property type="entry name" value="ATPase_NBD"/>
</dbReference>
<dbReference type="NCBIfam" id="TIGR00016">
    <property type="entry name" value="ackA"/>
    <property type="match status" value="1"/>
</dbReference>
<dbReference type="PANTHER" id="PTHR21060">
    <property type="entry name" value="ACETATE KINASE"/>
    <property type="match status" value="1"/>
</dbReference>
<dbReference type="PANTHER" id="PTHR21060:SF21">
    <property type="entry name" value="ACETATE KINASE"/>
    <property type="match status" value="1"/>
</dbReference>
<dbReference type="Pfam" id="PF00871">
    <property type="entry name" value="Acetate_kinase"/>
    <property type="match status" value="1"/>
</dbReference>
<dbReference type="PIRSF" id="PIRSF000722">
    <property type="entry name" value="Acetate_prop_kin"/>
    <property type="match status" value="1"/>
</dbReference>
<dbReference type="PRINTS" id="PR00471">
    <property type="entry name" value="ACETATEKNASE"/>
</dbReference>
<dbReference type="SUPFAM" id="SSF53067">
    <property type="entry name" value="Actin-like ATPase domain"/>
    <property type="match status" value="2"/>
</dbReference>
<dbReference type="PROSITE" id="PS01075">
    <property type="entry name" value="ACETATE_KINASE_1"/>
    <property type="match status" value="1"/>
</dbReference>
<dbReference type="PROSITE" id="PS01076">
    <property type="entry name" value="ACETATE_KINASE_2"/>
    <property type="match status" value="1"/>
</dbReference>
<evidence type="ECO:0000255" key="1">
    <source>
        <dbReference type="HAMAP-Rule" id="MF_00020"/>
    </source>
</evidence>
<reference key="1">
    <citation type="submission" date="2007-03" db="EMBL/GenBank/DDBJ databases">
        <title>Complete sequence of Shewanella loihica PV-4.</title>
        <authorList>
            <consortium name="US DOE Joint Genome Institute"/>
            <person name="Copeland A."/>
            <person name="Lucas S."/>
            <person name="Lapidus A."/>
            <person name="Barry K."/>
            <person name="Detter J.C."/>
            <person name="Glavina del Rio T."/>
            <person name="Hammon N."/>
            <person name="Israni S."/>
            <person name="Dalin E."/>
            <person name="Tice H."/>
            <person name="Pitluck S."/>
            <person name="Chain P."/>
            <person name="Malfatti S."/>
            <person name="Shin M."/>
            <person name="Vergez L."/>
            <person name="Schmutz J."/>
            <person name="Larimer F."/>
            <person name="Land M."/>
            <person name="Hauser L."/>
            <person name="Kyrpides N."/>
            <person name="Mikhailova N."/>
            <person name="Romine M.F."/>
            <person name="Serres G."/>
            <person name="Fredrickson J."/>
            <person name="Tiedje J."/>
            <person name="Richardson P."/>
        </authorList>
    </citation>
    <scope>NUCLEOTIDE SEQUENCE [LARGE SCALE GENOMIC DNA]</scope>
    <source>
        <strain>ATCC BAA-1088 / PV-4</strain>
    </source>
</reference>
<organism>
    <name type="scientific">Shewanella loihica (strain ATCC BAA-1088 / PV-4)</name>
    <dbReference type="NCBI Taxonomy" id="323850"/>
    <lineage>
        <taxon>Bacteria</taxon>
        <taxon>Pseudomonadati</taxon>
        <taxon>Pseudomonadota</taxon>
        <taxon>Gammaproteobacteria</taxon>
        <taxon>Alteromonadales</taxon>
        <taxon>Shewanellaceae</taxon>
        <taxon>Shewanella</taxon>
    </lineage>
</organism>